<protein>
    <recommendedName>
        <fullName evidence="1">Argininosuccinate synthase</fullName>
        <ecNumber evidence="1">6.3.4.5</ecNumber>
    </recommendedName>
    <alternativeName>
        <fullName evidence="1">Citrulline--aspartate ligase</fullName>
    </alternativeName>
</protein>
<feature type="chain" id="PRO_1000089021" description="Argininosuccinate synthase">
    <location>
        <begin position="1"/>
        <end position="403"/>
    </location>
</feature>
<feature type="binding site" evidence="1">
    <location>
        <begin position="13"/>
        <end position="21"/>
    </location>
    <ligand>
        <name>ATP</name>
        <dbReference type="ChEBI" id="CHEBI:30616"/>
    </ligand>
</feature>
<feature type="binding site" evidence="1">
    <location>
        <position position="40"/>
    </location>
    <ligand>
        <name>ATP</name>
        <dbReference type="ChEBI" id="CHEBI:30616"/>
    </ligand>
</feature>
<feature type="binding site" evidence="1">
    <location>
        <position position="92"/>
    </location>
    <ligand>
        <name>L-citrulline</name>
        <dbReference type="ChEBI" id="CHEBI:57743"/>
    </ligand>
</feature>
<feature type="binding site" evidence="1">
    <location>
        <position position="97"/>
    </location>
    <ligand>
        <name>L-citrulline</name>
        <dbReference type="ChEBI" id="CHEBI:57743"/>
    </ligand>
</feature>
<feature type="binding site" evidence="1">
    <location>
        <position position="122"/>
    </location>
    <ligand>
        <name>ATP</name>
        <dbReference type="ChEBI" id="CHEBI:30616"/>
    </ligand>
</feature>
<feature type="binding site" evidence="1">
    <location>
        <position position="124"/>
    </location>
    <ligand>
        <name>L-aspartate</name>
        <dbReference type="ChEBI" id="CHEBI:29991"/>
    </ligand>
</feature>
<feature type="binding site" evidence="1">
    <location>
        <position position="128"/>
    </location>
    <ligand>
        <name>L-aspartate</name>
        <dbReference type="ChEBI" id="CHEBI:29991"/>
    </ligand>
</feature>
<feature type="binding site" evidence="1">
    <location>
        <position position="128"/>
    </location>
    <ligand>
        <name>L-citrulline</name>
        <dbReference type="ChEBI" id="CHEBI:57743"/>
    </ligand>
</feature>
<feature type="binding site" evidence="1">
    <location>
        <position position="129"/>
    </location>
    <ligand>
        <name>L-aspartate</name>
        <dbReference type="ChEBI" id="CHEBI:29991"/>
    </ligand>
</feature>
<feature type="binding site" evidence="1">
    <location>
        <position position="132"/>
    </location>
    <ligand>
        <name>L-citrulline</name>
        <dbReference type="ChEBI" id="CHEBI:57743"/>
    </ligand>
</feature>
<feature type="binding site" evidence="1">
    <location>
        <position position="181"/>
    </location>
    <ligand>
        <name>L-citrulline</name>
        <dbReference type="ChEBI" id="CHEBI:57743"/>
    </ligand>
</feature>
<feature type="binding site" evidence="1">
    <location>
        <position position="190"/>
    </location>
    <ligand>
        <name>L-citrulline</name>
        <dbReference type="ChEBI" id="CHEBI:57743"/>
    </ligand>
</feature>
<feature type="binding site" evidence="1">
    <location>
        <position position="266"/>
    </location>
    <ligand>
        <name>L-citrulline</name>
        <dbReference type="ChEBI" id="CHEBI:57743"/>
    </ligand>
</feature>
<feature type="binding site" evidence="1">
    <location>
        <position position="278"/>
    </location>
    <ligand>
        <name>L-citrulline</name>
        <dbReference type="ChEBI" id="CHEBI:57743"/>
    </ligand>
</feature>
<accession>B6EMN8</accession>
<sequence>MNKKVNVNKVVVAYSGGLDTSVIIPWLKENYDCEVIAFVADVGQGAEELEGIEAKAIASGASECYVADLKEEMVSEYIFPTLKTGALYEGKYLLGTSMARPIIAKAQVEVARNVGADALCHGCTGKGNDQIRFEGAFAALAPDLHVIAPWREWDLVSREECLDYLAERNIPCTASLTKIYSRDANAWHISTEGGVLEDTWNEPNEDCWAWTVDPEQAPNESETVSIKVEKGAVVAVDGKAMTPYEVVVYLNEKGIKHGVGRIDIVENRLVGMKSRGCYETPGGTIINEALRAVEQLVLDKASFEFREELGIKASHLVYDGRWFTPLCKSILAATEELAQDVNGDVVIKLYKGQATVTQKRSDNSLYSEEFATFGADEVYDQSHAEGFIRLYSLSSRIRALNSK</sequence>
<name>ASSY_ALISL</name>
<evidence type="ECO:0000255" key="1">
    <source>
        <dbReference type="HAMAP-Rule" id="MF_00005"/>
    </source>
</evidence>
<dbReference type="EC" id="6.3.4.5" evidence="1"/>
<dbReference type="EMBL" id="FM178379">
    <property type="protein sequence ID" value="CAQ80442.1"/>
    <property type="molecule type" value="Genomic_DNA"/>
</dbReference>
<dbReference type="RefSeq" id="WP_012551198.1">
    <property type="nucleotide sequence ID" value="NC_011312.1"/>
</dbReference>
<dbReference type="SMR" id="B6EMN8"/>
<dbReference type="KEGG" id="vsa:VSAL_I2758"/>
<dbReference type="eggNOG" id="COG0137">
    <property type="taxonomic scope" value="Bacteria"/>
</dbReference>
<dbReference type="HOGENOM" id="CLU_032784_4_2_6"/>
<dbReference type="UniPathway" id="UPA00068">
    <property type="reaction ID" value="UER00113"/>
</dbReference>
<dbReference type="Proteomes" id="UP000001730">
    <property type="component" value="Chromosome 1"/>
</dbReference>
<dbReference type="GO" id="GO:0005737">
    <property type="term" value="C:cytoplasm"/>
    <property type="evidence" value="ECO:0007669"/>
    <property type="project" value="UniProtKB-SubCell"/>
</dbReference>
<dbReference type="GO" id="GO:0004055">
    <property type="term" value="F:argininosuccinate synthase activity"/>
    <property type="evidence" value="ECO:0007669"/>
    <property type="project" value="UniProtKB-UniRule"/>
</dbReference>
<dbReference type="GO" id="GO:0005524">
    <property type="term" value="F:ATP binding"/>
    <property type="evidence" value="ECO:0007669"/>
    <property type="project" value="UniProtKB-UniRule"/>
</dbReference>
<dbReference type="GO" id="GO:0000053">
    <property type="term" value="P:argininosuccinate metabolic process"/>
    <property type="evidence" value="ECO:0007669"/>
    <property type="project" value="TreeGrafter"/>
</dbReference>
<dbReference type="GO" id="GO:0006526">
    <property type="term" value="P:L-arginine biosynthetic process"/>
    <property type="evidence" value="ECO:0007669"/>
    <property type="project" value="UniProtKB-UniRule"/>
</dbReference>
<dbReference type="GO" id="GO:0000050">
    <property type="term" value="P:urea cycle"/>
    <property type="evidence" value="ECO:0007669"/>
    <property type="project" value="TreeGrafter"/>
</dbReference>
<dbReference type="CDD" id="cd01999">
    <property type="entry name" value="ASS"/>
    <property type="match status" value="1"/>
</dbReference>
<dbReference type="FunFam" id="3.40.50.620:FF:000019">
    <property type="entry name" value="Argininosuccinate synthase"/>
    <property type="match status" value="1"/>
</dbReference>
<dbReference type="FunFam" id="3.90.1260.10:FF:000007">
    <property type="entry name" value="Argininosuccinate synthase"/>
    <property type="match status" value="1"/>
</dbReference>
<dbReference type="Gene3D" id="3.90.1260.10">
    <property type="entry name" value="Argininosuccinate synthetase, chain A, domain 2"/>
    <property type="match status" value="1"/>
</dbReference>
<dbReference type="Gene3D" id="3.40.50.620">
    <property type="entry name" value="HUPs"/>
    <property type="match status" value="1"/>
</dbReference>
<dbReference type="Gene3D" id="1.20.5.470">
    <property type="entry name" value="Single helix bin"/>
    <property type="match status" value="1"/>
</dbReference>
<dbReference type="HAMAP" id="MF_00005">
    <property type="entry name" value="Arg_succ_synth_type1"/>
    <property type="match status" value="1"/>
</dbReference>
<dbReference type="InterPro" id="IPR048268">
    <property type="entry name" value="Arginosuc_syn_C"/>
</dbReference>
<dbReference type="InterPro" id="IPR048267">
    <property type="entry name" value="Arginosuc_syn_N"/>
</dbReference>
<dbReference type="InterPro" id="IPR001518">
    <property type="entry name" value="Arginosuc_synth"/>
</dbReference>
<dbReference type="InterPro" id="IPR018223">
    <property type="entry name" value="Arginosuc_synth_CS"/>
</dbReference>
<dbReference type="InterPro" id="IPR023434">
    <property type="entry name" value="Arginosuc_synth_type_1_subfam"/>
</dbReference>
<dbReference type="InterPro" id="IPR024074">
    <property type="entry name" value="AS_cat/multimer_dom_body"/>
</dbReference>
<dbReference type="InterPro" id="IPR014729">
    <property type="entry name" value="Rossmann-like_a/b/a_fold"/>
</dbReference>
<dbReference type="NCBIfam" id="TIGR00032">
    <property type="entry name" value="argG"/>
    <property type="match status" value="1"/>
</dbReference>
<dbReference type="NCBIfam" id="NF001770">
    <property type="entry name" value="PRK00509.1"/>
    <property type="match status" value="1"/>
</dbReference>
<dbReference type="PANTHER" id="PTHR11587">
    <property type="entry name" value="ARGININOSUCCINATE SYNTHASE"/>
    <property type="match status" value="1"/>
</dbReference>
<dbReference type="PANTHER" id="PTHR11587:SF2">
    <property type="entry name" value="ARGININOSUCCINATE SYNTHASE"/>
    <property type="match status" value="1"/>
</dbReference>
<dbReference type="Pfam" id="PF20979">
    <property type="entry name" value="Arginosuc_syn_C"/>
    <property type="match status" value="1"/>
</dbReference>
<dbReference type="Pfam" id="PF00764">
    <property type="entry name" value="Arginosuc_synth"/>
    <property type="match status" value="1"/>
</dbReference>
<dbReference type="SUPFAM" id="SSF52402">
    <property type="entry name" value="Adenine nucleotide alpha hydrolases-like"/>
    <property type="match status" value="1"/>
</dbReference>
<dbReference type="SUPFAM" id="SSF69864">
    <property type="entry name" value="Argininosuccinate synthetase, C-terminal domain"/>
    <property type="match status" value="1"/>
</dbReference>
<dbReference type="PROSITE" id="PS00564">
    <property type="entry name" value="ARGININOSUCCIN_SYN_1"/>
    <property type="match status" value="1"/>
</dbReference>
<dbReference type="PROSITE" id="PS00565">
    <property type="entry name" value="ARGININOSUCCIN_SYN_2"/>
    <property type="match status" value="1"/>
</dbReference>
<organism>
    <name type="scientific">Aliivibrio salmonicida (strain LFI1238)</name>
    <name type="common">Vibrio salmonicida (strain LFI1238)</name>
    <dbReference type="NCBI Taxonomy" id="316275"/>
    <lineage>
        <taxon>Bacteria</taxon>
        <taxon>Pseudomonadati</taxon>
        <taxon>Pseudomonadota</taxon>
        <taxon>Gammaproteobacteria</taxon>
        <taxon>Vibrionales</taxon>
        <taxon>Vibrionaceae</taxon>
        <taxon>Aliivibrio</taxon>
    </lineage>
</organism>
<gene>
    <name evidence="1" type="primary">argG</name>
    <name type="ordered locus">VSAL_I2758</name>
</gene>
<reference key="1">
    <citation type="journal article" date="2008" name="BMC Genomics">
        <title>The genome sequence of the fish pathogen Aliivibrio salmonicida strain LFI1238 shows extensive evidence of gene decay.</title>
        <authorList>
            <person name="Hjerde E."/>
            <person name="Lorentzen M.S."/>
            <person name="Holden M.T."/>
            <person name="Seeger K."/>
            <person name="Paulsen S."/>
            <person name="Bason N."/>
            <person name="Churcher C."/>
            <person name="Harris D."/>
            <person name="Norbertczak H."/>
            <person name="Quail M.A."/>
            <person name="Sanders S."/>
            <person name="Thurston S."/>
            <person name="Parkhill J."/>
            <person name="Willassen N.P."/>
            <person name="Thomson N.R."/>
        </authorList>
    </citation>
    <scope>NUCLEOTIDE SEQUENCE [LARGE SCALE GENOMIC DNA]</scope>
    <source>
        <strain>LFI1238</strain>
    </source>
</reference>
<proteinExistence type="inferred from homology"/>
<comment type="catalytic activity">
    <reaction evidence="1">
        <text>L-citrulline + L-aspartate + ATP = 2-(N(omega)-L-arginino)succinate + AMP + diphosphate + H(+)</text>
        <dbReference type="Rhea" id="RHEA:10932"/>
        <dbReference type="ChEBI" id="CHEBI:15378"/>
        <dbReference type="ChEBI" id="CHEBI:29991"/>
        <dbReference type="ChEBI" id="CHEBI:30616"/>
        <dbReference type="ChEBI" id="CHEBI:33019"/>
        <dbReference type="ChEBI" id="CHEBI:57472"/>
        <dbReference type="ChEBI" id="CHEBI:57743"/>
        <dbReference type="ChEBI" id="CHEBI:456215"/>
        <dbReference type="EC" id="6.3.4.5"/>
    </reaction>
</comment>
<comment type="pathway">
    <text evidence="1">Amino-acid biosynthesis; L-arginine biosynthesis; L-arginine from L-ornithine and carbamoyl phosphate: step 2/3.</text>
</comment>
<comment type="subunit">
    <text evidence="1">Homotetramer.</text>
</comment>
<comment type="subcellular location">
    <subcellularLocation>
        <location evidence="1">Cytoplasm</location>
    </subcellularLocation>
</comment>
<comment type="similarity">
    <text evidence="1">Belongs to the argininosuccinate synthase family. Type 1 subfamily.</text>
</comment>
<keyword id="KW-0028">Amino-acid biosynthesis</keyword>
<keyword id="KW-0055">Arginine biosynthesis</keyword>
<keyword id="KW-0067">ATP-binding</keyword>
<keyword id="KW-0963">Cytoplasm</keyword>
<keyword id="KW-0436">Ligase</keyword>
<keyword id="KW-0547">Nucleotide-binding</keyword>